<accession>Q4R8R4</accession>
<keyword id="KW-0007">Acetylation</keyword>
<keyword id="KW-0963">Cytoplasm</keyword>
<keyword id="KW-0396">Initiation factor</keyword>
<keyword id="KW-0597">Phosphoprotein</keyword>
<keyword id="KW-0648">Protein biosynthesis</keyword>
<keyword id="KW-1185">Reference proteome</keyword>
<keyword id="KW-0694">RNA-binding</keyword>
<evidence type="ECO:0000250" key="1">
    <source>
        <dbReference type="UniProtKB" id="K7IM66"/>
    </source>
</evidence>
<evidence type="ECO:0000250" key="2">
    <source>
        <dbReference type="UniProtKB" id="O15371"/>
    </source>
</evidence>
<evidence type="ECO:0000250" key="3">
    <source>
        <dbReference type="UniProtKB" id="O70194"/>
    </source>
</evidence>
<evidence type="ECO:0000255" key="4">
    <source>
        <dbReference type="HAMAP-Rule" id="MF_03003"/>
    </source>
</evidence>
<evidence type="ECO:0000256" key="5">
    <source>
        <dbReference type="SAM" id="MobiDB-lite"/>
    </source>
</evidence>
<protein>
    <recommendedName>
        <fullName evidence="4">Eukaryotic translation initiation factor 3 subunit D</fullName>
        <shortName evidence="4">eIF3d</shortName>
    </recommendedName>
    <alternativeName>
        <fullName evidence="4">Eukaryotic translation initiation factor 3 subunit 7</fullName>
    </alternativeName>
    <alternativeName>
        <fullName evidence="4">eIF-3-zeta</fullName>
    </alternativeName>
</protein>
<name>EIF3D_MACFA</name>
<feature type="chain" id="PRO_0000364132" description="Eukaryotic translation initiation factor 3 subunit D">
    <location>
        <begin position="1"/>
        <end position="548"/>
    </location>
</feature>
<feature type="region of interest" description="RNA gate" evidence="1">
    <location>
        <begin position="285"/>
        <end position="299"/>
    </location>
</feature>
<feature type="region of interest" description="Disordered" evidence="5">
    <location>
        <begin position="523"/>
        <end position="548"/>
    </location>
</feature>
<feature type="compositionally biased region" description="Acidic residues" evidence="5">
    <location>
        <begin position="529"/>
        <end position="548"/>
    </location>
</feature>
<feature type="modified residue" description="N6-acetyllysine" evidence="3">
    <location>
        <position position="53"/>
    </location>
</feature>
<feature type="modified residue" description="Phosphoserine" evidence="2">
    <location>
        <position position="161"/>
    </location>
</feature>
<feature type="modified residue" description="Phosphoserine" evidence="2">
    <location>
        <position position="528"/>
    </location>
</feature>
<feature type="modified residue" description="Phosphoserine" evidence="2">
    <location>
        <position position="529"/>
    </location>
</feature>
<dbReference type="EMBL" id="AB168385">
    <property type="protein sequence ID" value="BAE00507.1"/>
    <property type="molecule type" value="mRNA"/>
</dbReference>
<dbReference type="SMR" id="Q4R8R4"/>
<dbReference type="STRING" id="9541.ENSMFAP00000045521"/>
<dbReference type="eggNOG" id="KOG2479">
    <property type="taxonomic scope" value="Eukaryota"/>
</dbReference>
<dbReference type="Proteomes" id="UP000233100">
    <property type="component" value="Unplaced"/>
</dbReference>
<dbReference type="GO" id="GO:0016282">
    <property type="term" value="C:eukaryotic 43S preinitiation complex"/>
    <property type="evidence" value="ECO:0007669"/>
    <property type="project" value="UniProtKB-UniRule"/>
</dbReference>
<dbReference type="GO" id="GO:0033290">
    <property type="term" value="C:eukaryotic 48S preinitiation complex"/>
    <property type="evidence" value="ECO:0007669"/>
    <property type="project" value="UniProtKB-UniRule"/>
</dbReference>
<dbReference type="GO" id="GO:0005852">
    <property type="term" value="C:eukaryotic translation initiation factor 3 complex"/>
    <property type="evidence" value="ECO:0000250"/>
    <property type="project" value="UniProtKB"/>
</dbReference>
<dbReference type="GO" id="GO:0098808">
    <property type="term" value="F:mRNA cap binding"/>
    <property type="evidence" value="ECO:0000250"/>
    <property type="project" value="UniProtKB"/>
</dbReference>
<dbReference type="GO" id="GO:0003723">
    <property type="term" value="F:RNA binding"/>
    <property type="evidence" value="ECO:0000250"/>
    <property type="project" value="UniProtKB"/>
</dbReference>
<dbReference type="GO" id="GO:0003743">
    <property type="term" value="F:translation initiation factor activity"/>
    <property type="evidence" value="ECO:0007669"/>
    <property type="project" value="UniProtKB-UniRule"/>
</dbReference>
<dbReference type="GO" id="GO:0002191">
    <property type="term" value="P:cap-dependent translational initiation"/>
    <property type="evidence" value="ECO:0000250"/>
    <property type="project" value="UniProtKB"/>
</dbReference>
<dbReference type="GO" id="GO:0001732">
    <property type="term" value="P:formation of cytoplasmic translation initiation complex"/>
    <property type="evidence" value="ECO:0007669"/>
    <property type="project" value="UniProtKB-UniRule"/>
</dbReference>
<dbReference type="GO" id="GO:0006413">
    <property type="term" value="P:translational initiation"/>
    <property type="evidence" value="ECO:0000250"/>
    <property type="project" value="UniProtKB"/>
</dbReference>
<dbReference type="HAMAP" id="MF_03003">
    <property type="entry name" value="eIF3d"/>
    <property type="match status" value="1"/>
</dbReference>
<dbReference type="InterPro" id="IPR007783">
    <property type="entry name" value="eIF3d"/>
</dbReference>
<dbReference type="PANTHER" id="PTHR12399">
    <property type="entry name" value="EUKARYOTIC TRANSLATION INITIATION FACTOR 3 SUBUNIT 7"/>
    <property type="match status" value="1"/>
</dbReference>
<dbReference type="PANTHER" id="PTHR12399:SF0">
    <property type="entry name" value="EUKARYOTIC TRANSLATION INITIATION FACTOR 3 SUBUNIT D"/>
    <property type="match status" value="1"/>
</dbReference>
<dbReference type="Pfam" id="PF05091">
    <property type="entry name" value="eIF-3_zeta"/>
    <property type="match status" value="1"/>
</dbReference>
<dbReference type="PIRSF" id="PIRSF016281">
    <property type="entry name" value="EIF-3_zeta"/>
    <property type="match status" value="1"/>
</dbReference>
<gene>
    <name evidence="4" type="primary">EIF3D</name>
    <name evidence="4" type="synonym">EIF3S7</name>
    <name type="ORF">QtsA-11731</name>
</gene>
<proteinExistence type="evidence at transcript level"/>
<organism>
    <name type="scientific">Macaca fascicularis</name>
    <name type="common">Crab-eating macaque</name>
    <name type="synonym">Cynomolgus monkey</name>
    <dbReference type="NCBI Taxonomy" id="9541"/>
    <lineage>
        <taxon>Eukaryota</taxon>
        <taxon>Metazoa</taxon>
        <taxon>Chordata</taxon>
        <taxon>Craniata</taxon>
        <taxon>Vertebrata</taxon>
        <taxon>Euteleostomi</taxon>
        <taxon>Mammalia</taxon>
        <taxon>Eutheria</taxon>
        <taxon>Euarchontoglires</taxon>
        <taxon>Primates</taxon>
        <taxon>Haplorrhini</taxon>
        <taxon>Catarrhini</taxon>
        <taxon>Cercopithecidae</taxon>
        <taxon>Cercopithecinae</taxon>
        <taxon>Macaca</taxon>
    </lineage>
</organism>
<comment type="function">
    <text evidence="4">mRNA cap-binding component of the eukaryotic translation initiation factor 3 (eIF-3) complex, a complex required for several steps in the initiation of protein synthesis of a specialized repertoire of mRNAs. The eIF-3 complex associates with the 40S ribosome and facilitates the recruitment of eIF-1, eIF-1A, eIF-2:GTP:methionyl-tRNAi and eIF-5 to form the 43S pre-initiation complex (43S PIC). The eIF-3 complex stimulates mRNA recruitment to the 43S PIC and scanning of the mRNA for AUG recognition. The eIF-3 complex is also required for disassembly and recycling of post-termination ribosomal complexes and subsequently prevents premature joining of the 40S and 60S ribosomal subunits prior to initiation. The eIF-3 complex specifically targets and initiates translation of a subset of mRNAs involved in cell proliferation, including cell cycling, differentiation and apoptosis, and uses different modes of RNA stem-loop binding to exert either translational activation or repression. In the eIF-3 complex, EIF3D specifically recognizes and binds the 7-methylguanosine cap of a subset of mRNAs.</text>
</comment>
<comment type="subunit">
    <text evidence="4">Component of the eukaryotic translation initiation factor 3 (eIF-3) complex, which is composed of 13 subunits: EIF3A, EIF3B, EIF3C, EIF3D, EIF3E, EIF3F, EIF3G, EIF3H, EIF3I, EIF3J, EIF3K, EIF3L and EIF3M. The eIF-3 complex appears to include 3 stable modules: module A is composed of EIF3A, EIF3B, EIF3G and EIF3I; module B is composed of EIF3F, EIF3H, and EIF3M; and module C is composed of EIF3C, EIF3D, EIF3E, EIF3K and EIF3L. EIF3C of module C binds EIF3B of module A and EIF3H of module B, thereby linking the three modules. EIF3J is a labile subunit that binds to the eIF-3 complex via EIF3B. The eIF-3 complex interacts with RPS6KB1 under conditions of nutrient depletion. Mitogenic stimulation leads to binding and activation of a complex composed of MTOR and RPTOR, leading to phosphorylation and release of RPS6KB1 and binding of EIF4B to eIF-3.</text>
</comment>
<comment type="subcellular location">
    <subcellularLocation>
        <location evidence="4">Cytoplasm</location>
    </subcellularLocation>
</comment>
<comment type="domain">
    <text evidence="4">The RNA gate region regulates mRNA cap recognition to prevent promiscuous mRNA-binding before assembly of eif3d into the full eukaryotic translation initiation factor 3 (eIF-3) complex.</text>
</comment>
<comment type="similarity">
    <text evidence="4">Belongs to the eIF-3 subunit D family.</text>
</comment>
<reference key="1">
    <citation type="submission" date="2005-06" db="EMBL/GenBank/DDBJ databases">
        <title>DNA sequences of macaque genes expressed in brain or testis and its evolutionary implications.</title>
        <authorList>
            <consortium name="International consortium for macaque cDNA sequencing and analysis"/>
        </authorList>
    </citation>
    <scope>NUCLEOTIDE SEQUENCE [LARGE SCALE MRNA]</scope>
    <source>
        <tissue>Testis</tissue>
    </source>
</reference>
<sequence>MAKFMTPVIQDNPSGWGPCAVPEQFRDMPYQPFSKGDRLGKVADWTGATYQDKRYTNKYSSQFGGGSQYAYFHEEDESSFQLVDTARTQKTAYQRNRMRFAQRNLRRDKDRRNMLQFNLQILPKSAKQKERERIRLQKKFQKQFGVRQKWDQKSQKPRDSSVEVRSDWEVKEEMDFPQLMKMRYLEVSEPQDIECCGALEYYDKAFDRITTRSEKPLRSIKRIFHTVTTTDDPVIRKLAKTQGNVFATDAILATLMSCTRSVYSWDIVVQRVGSKLFFDKRDNSDFDLLTVSETANEPPQDEGNSFNSPRNLAMEATYINHNFSQQCLRMGKERYNFPNPNPFVEDDMDKNEIASVAYRYRWWKLGDDIDLIVRCEHDGVMTGANGGVSFINIKTLNEWDSRHCNGVDWRQKLDSQRGAVIATELKNNSYKLARWTCCALLAGSEYLKLGYVSRYHVKDSSRHVILGTQQFKPNEFASQINLSVENAWGILRCVIDICMKLEEGKYLILKDPNKQVIRVYSLPDGTFSSDEDEEEEEEEEEEEEEEET</sequence>